<dbReference type="EC" id="2.8.1.1" evidence="1"/>
<dbReference type="EMBL" id="CP000680">
    <property type="protein sequence ID" value="ABP86763.1"/>
    <property type="molecule type" value="Genomic_DNA"/>
</dbReference>
<dbReference type="SMR" id="A4XZJ7"/>
<dbReference type="STRING" id="399739.Pmen_4016"/>
<dbReference type="KEGG" id="pmy:Pmen_4016"/>
<dbReference type="PATRIC" id="fig|399739.8.peg.4069"/>
<dbReference type="eggNOG" id="COG0607">
    <property type="taxonomic scope" value="Bacteria"/>
</dbReference>
<dbReference type="HOGENOM" id="CLU_089574_14_0_6"/>
<dbReference type="OrthoDB" id="9811849at2"/>
<dbReference type="GO" id="GO:0005737">
    <property type="term" value="C:cytoplasm"/>
    <property type="evidence" value="ECO:0007669"/>
    <property type="project" value="UniProtKB-SubCell"/>
</dbReference>
<dbReference type="GO" id="GO:0004792">
    <property type="term" value="F:thiosulfate-cyanide sulfurtransferase activity"/>
    <property type="evidence" value="ECO:0007669"/>
    <property type="project" value="UniProtKB-UniRule"/>
</dbReference>
<dbReference type="GO" id="GO:0006071">
    <property type="term" value="P:glycerol metabolic process"/>
    <property type="evidence" value="ECO:0007669"/>
    <property type="project" value="UniProtKB-UniRule"/>
</dbReference>
<dbReference type="CDD" id="cd01444">
    <property type="entry name" value="GlpE_ST"/>
    <property type="match status" value="1"/>
</dbReference>
<dbReference type="Gene3D" id="3.40.250.10">
    <property type="entry name" value="Rhodanese-like domain"/>
    <property type="match status" value="1"/>
</dbReference>
<dbReference type="HAMAP" id="MF_01009">
    <property type="entry name" value="Thiosulf_sulfurtr"/>
    <property type="match status" value="1"/>
</dbReference>
<dbReference type="InterPro" id="IPR050229">
    <property type="entry name" value="GlpE_sulfurtransferase"/>
</dbReference>
<dbReference type="InterPro" id="IPR001763">
    <property type="entry name" value="Rhodanese-like_dom"/>
</dbReference>
<dbReference type="InterPro" id="IPR036873">
    <property type="entry name" value="Rhodanese-like_dom_sf"/>
</dbReference>
<dbReference type="InterPro" id="IPR023695">
    <property type="entry name" value="Thiosulf_sulfurTrfase"/>
</dbReference>
<dbReference type="NCBIfam" id="NF001195">
    <property type="entry name" value="PRK00162.1"/>
    <property type="match status" value="1"/>
</dbReference>
<dbReference type="PANTHER" id="PTHR43031">
    <property type="entry name" value="FAD-DEPENDENT OXIDOREDUCTASE"/>
    <property type="match status" value="1"/>
</dbReference>
<dbReference type="PANTHER" id="PTHR43031:SF6">
    <property type="entry name" value="THIOSULFATE SULFURTRANSFERASE GLPE"/>
    <property type="match status" value="1"/>
</dbReference>
<dbReference type="Pfam" id="PF00581">
    <property type="entry name" value="Rhodanese"/>
    <property type="match status" value="1"/>
</dbReference>
<dbReference type="SMART" id="SM00450">
    <property type="entry name" value="RHOD"/>
    <property type="match status" value="1"/>
</dbReference>
<dbReference type="SUPFAM" id="SSF52821">
    <property type="entry name" value="Rhodanese/Cell cycle control phosphatase"/>
    <property type="match status" value="1"/>
</dbReference>
<dbReference type="PROSITE" id="PS50206">
    <property type="entry name" value="RHODANESE_3"/>
    <property type="match status" value="1"/>
</dbReference>
<sequence>MSEFKRISPQQAQELRSNGAVVVDIRDPQSFALGHISGSRHLDNHSLHDFITHADLDAPLIVSCYHGNSSQSAAAYLAGQGFSEVYSLDGGFELWRATFPSETAQGSEE</sequence>
<reference key="1">
    <citation type="submission" date="2007-04" db="EMBL/GenBank/DDBJ databases">
        <title>Complete sequence of Pseudomonas mendocina ymp.</title>
        <authorList>
            <consortium name="US DOE Joint Genome Institute"/>
            <person name="Copeland A."/>
            <person name="Lucas S."/>
            <person name="Lapidus A."/>
            <person name="Barry K."/>
            <person name="Glavina del Rio T."/>
            <person name="Dalin E."/>
            <person name="Tice H."/>
            <person name="Pitluck S."/>
            <person name="Kiss H."/>
            <person name="Brettin T."/>
            <person name="Detter J.C."/>
            <person name="Bruce D."/>
            <person name="Han C."/>
            <person name="Schmutz J."/>
            <person name="Larimer F."/>
            <person name="Land M."/>
            <person name="Hauser L."/>
            <person name="Kyrpides N."/>
            <person name="Mikhailova N."/>
            <person name="Hersman L."/>
            <person name="Dubois J."/>
            <person name="Maurice P."/>
            <person name="Richardson P."/>
        </authorList>
    </citation>
    <scope>NUCLEOTIDE SEQUENCE [LARGE SCALE GENOMIC DNA]</scope>
    <source>
        <strain>ymp</strain>
    </source>
</reference>
<protein>
    <recommendedName>
        <fullName evidence="1">Thiosulfate sulfurtransferase GlpE</fullName>
        <ecNumber evidence="1">2.8.1.1</ecNumber>
    </recommendedName>
</protein>
<proteinExistence type="inferred from homology"/>
<evidence type="ECO:0000255" key="1">
    <source>
        <dbReference type="HAMAP-Rule" id="MF_01009"/>
    </source>
</evidence>
<name>GLPE_ECTM1</name>
<keyword id="KW-0963">Cytoplasm</keyword>
<keyword id="KW-0808">Transferase</keyword>
<accession>A4XZJ7</accession>
<comment type="function">
    <text evidence="1">Transferase that catalyzes the transfer of sulfur from thiosulfate to thiophilic acceptors such as cyanide or dithiols. May function in a CysM-independent thiosulfate assimilation pathway by catalyzing the conversion of thiosulfate to sulfite, which can then be used for L-cysteine biosynthesis.</text>
</comment>
<comment type="catalytic activity">
    <reaction evidence="1">
        <text>thiosulfate + hydrogen cyanide = thiocyanate + sulfite + 2 H(+)</text>
        <dbReference type="Rhea" id="RHEA:16881"/>
        <dbReference type="ChEBI" id="CHEBI:15378"/>
        <dbReference type="ChEBI" id="CHEBI:17359"/>
        <dbReference type="ChEBI" id="CHEBI:18022"/>
        <dbReference type="ChEBI" id="CHEBI:18407"/>
        <dbReference type="ChEBI" id="CHEBI:33542"/>
        <dbReference type="EC" id="2.8.1.1"/>
    </reaction>
</comment>
<comment type="catalytic activity">
    <reaction evidence="1">
        <text>thiosulfate + [thioredoxin]-dithiol = [thioredoxin]-disulfide + hydrogen sulfide + sulfite + 2 H(+)</text>
        <dbReference type="Rhea" id="RHEA:83859"/>
        <dbReference type="Rhea" id="RHEA-COMP:10698"/>
        <dbReference type="Rhea" id="RHEA-COMP:10700"/>
        <dbReference type="ChEBI" id="CHEBI:15378"/>
        <dbReference type="ChEBI" id="CHEBI:17359"/>
        <dbReference type="ChEBI" id="CHEBI:29919"/>
        <dbReference type="ChEBI" id="CHEBI:29950"/>
        <dbReference type="ChEBI" id="CHEBI:33542"/>
        <dbReference type="ChEBI" id="CHEBI:50058"/>
    </reaction>
</comment>
<comment type="subcellular location">
    <subcellularLocation>
        <location evidence="1">Cytoplasm</location>
    </subcellularLocation>
</comment>
<comment type="similarity">
    <text evidence="1">Belongs to the GlpE family.</text>
</comment>
<organism>
    <name type="scientific">Ectopseudomonas mendocina (strain ymp)</name>
    <name type="common">Pseudomonas mendocina</name>
    <dbReference type="NCBI Taxonomy" id="399739"/>
    <lineage>
        <taxon>Bacteria</taxon>
        <taxon>Pseudomonadati</taxon>
        <taxon>Pseudomonadota</taxon>
        <taxon>Gammaproteobacteria</taxon>
        <taxon>Pseudomonadales</taxon>
        <taxon>Pseudomonadaceae</taxon>
        <taxon>Ectopseudomonas</taxon>
    </lineage>
</organism>
<feature type="chain" id="PRO_1000062971" description="Thiosulfate sulfurtransferase GlpE">
    <location>
        <begin position="1"/>
        <end position="109"/>
    </location>
</feature>
<feature type="domain" description="Rhodanese" evidence="1">
    <location>
        <begin position="16"/>
        <end position="104"/>
    </location>
</feature>
<feature type="active site" description="Cysteine persulfide intermediate" evidence="1">
    <location>
        <position position="64"/>
    </location>
</feature>
<gene>
    <name evidence="1" type="primary">glpE</name>
    <name type="ordered locus">Pmen_4016</name>
</gene>